<protein>
    <recommendedName>
        <fullName>Epoxide hydrolase 1</fullName>
        <ecNumber evidence="2">3.3.2.9</ecNumber>
    </recommendedName>
    <alternativeName>
        <fullName>Epoxide hydratase</fullName>
    </alternativeName>
    <alternativeName>
        <fullName>Microsomal epoxide hydrolase</fullName>
        <shortName evidence="5">mEH</shortName>
    </alternativeName>
</protein>
<accession>P79381</accession>
<name>HYEP_PIG</name>
<dbReference type="EC" id="3.3.2.9" evidence="2"/>
<dbReference type="EMBL" id="AB000883">
    <property type="protein sequence ID" value="BAA19200.1"/>
    <property type="molecule type" value="mRNA"/>
</dbReference>
<dbReference type="RefSeq" id="NP_999520.1">
    <property type="nucleotide sequence ID" value="NM_214355.1"/>
</dbReference>
<dbReference type="RefSeq" id="XP_005653835.1">
    <property type="nucleotide sequence ID" value="XM_005653778.1"/>
</dbReference>
<dbReference type="RefSeq" id="XP_005653836.1">
    <property type="nucleotide sequence ID" value="XM_005653779.1"/>
</dbReference>
<dbReference type="RefSeq" id="XP_005653837.1">
    <property type="nucleotide sequence ID" value="XM_005653780.1"/>
</dbReference>
<dbReference type="RefSeq" id="XP_005653838.1">
    <property type="nucleotide sequence ID" value="XM_005653781.2"/>
</dbReference>
<dbReference type="RefSeq" id="XP_005653839.1">
    <property type="nucleotide sequence ID" value="XM_005653782.1"/>
</dbReference>
<dbReference type="RefSeq" id="XP_005653840.1">
    <property type="nucleotide sequence ID" value="XM_005653783.1"/>
</dbReference>
<dbReference type="RefSeq" id="XP_013833722.1">
    <property type="nucleotide sequence ID" value="XM_013978268.1"/>
</dbReference>
<dbReference type="SMR" id="P79381"/>
<dbReference type="FunCoup" id="P79381">
    <property type="interactions" value="293"/>
</dbReference>
<dbReference type="STRING" id="9823.ENSSSCP00000011571"/>
<dbReference type="ESTHER" id="pig-hyep">
    <property type="family name" value="Epoxide_hydrolase"/>
</dbReference>
<dbReference type="MEROPS" id="S33.971"/>
<dbReference type="PaxDb" id="9823-ENSSSCP00000011571"/>
<dbReference type="PeptideAtlas" id="P79381"/>
<dbReference type="Ensembl" id="ENSSSCT00015043861.1">
    <property type="protein sequence ID" value="ENSSSCP00015017323.1"/>
    <property type="gene ID" value="ENSSSCG00015033152.1"/>
</dbReference>
<dbReference type="Ensembl" id="ENSSSCT00045065906.1">
    <property type="protein sequence ID" value="ENSSSCP00045046673.1"/>
    <property type="gene ID" value="ENSSSCG00045038103.1"/>
</dbReference>
<dbReference type="Ensembl" id="ENSSSCT00045065922.1">
    <property type="protein sequence ID" value="ENSSSCP00045046688.1"/>
    <property type="gene ID" value="ENSSSCG00045038103.1"/>
</dbReference>
<dbReference type="Ensembl" id="ENSSSCT00045065941.1">
    <property type="protein sequence ID" value="ENSSSCP00045046706.1"/>
    <property type="gene ID" value="ENSSSCG00045038103.1"/>
</dbReference>
<dbReference type="Ensembl" id="ENSSSCT00045065962.1">
    <property type="protein sequence ID" value="ENSSSCP00045046726.1"/>
    <property type="gene ID" value="ENSSSCG00045038103.1"/>
</dbReference>
<dbReference type="Ensembl" id="ENSSSCT00045065992.1">
    <property type="protein sequence ID" value="ENSSSCP00045046752.1"/>
    <property type="gene ID" value="ENSSSCG00045038103.1"/>
</dbReference>
<dbReference type="Ensembl" id="ENSSSCT00045066013.1">
    <property type="protein sequence ID" value="ENSSSCP00045046770.1"/>
    <property type="gene ID" value="ENSSSCG00045038103.1"/>
</dbReference>
<dbReference type="Ensembl" id="ENSSSCT00045066037.1">
    <property type="protein sequence ID" value="ENSSSCP00045046791.1"/>
    <property type="gene ID" value="ENSSSCG00045038103.1"/>
</dbReference>
<dbReference type="Ensembl" id="ENSSSCT00045066069.1">
    <property type="protein sequence ID" value="ENSSSCP00045046818.1"/>
    <property type="gene ID" value="ENSSSCG00045038103.1"/>
</dbReference>
<dbReference type="Ensembl" id="ENSSSCT00045066109.1">
    <property type="protein sequence ID" value="ENSSSCP00045046847.1"/>
    <property type="gene ID" value="ENSSSCG00045038103.1"/>
</dbReference>
<dbReference type="Ensembl" id="ENSSSCT00055028045.1">
    <property type="protein sequence ID" value="ENSSSCP00055022343.1"/>
    <property type="gene ID" value="ENSSSCG00055014206.1"/>
</dbReference>
<dbReference type="Ensembl" id="ENSSSCT00070013483.1">
    <property type="protein sequence ID" value="ENSSSCP00070011117.1"/>
    <property type="gene ID" value="ENSSSCG00070006950.1"/>
</dbReference>
<dbReference type="Ensembl" id="ENSSSCT00070013491.1">
    <property type="protein sequence ID" value="ENSSSCP00070011123.1"/>
    <property type="gene ID" value="ENSSSCG00070006950.1"/>
</dbReference>
<dbReference type="Ensembl" id="ENSSSCT00070013511.1">
    <property type="protein sequence ID" value="ENSSSCP00070011138.1"/>
    <property type="gene ID" value="ENSSSCG00070006950.1"/>
</dbReference>
<dbReference type="Ensembl" id="ENSSSCT00090006088">
    <property type="protein sequence ID" value="ENSSSCP00090003896"/>
    <property type="gene ID" value="ENSSSCG00090003444"/>
</dbReference>
<dbReference type="GeneID" id="397639"/>
<dbReference type="KEGG" id="ssc:397639"/>
<dbReference type="CTD" id="2052"/>
<dbReference type="eggNOG" id="KOG2565">
    <property type="taxonomic scope" value="Eukaryota"/>
</dbReference>
<dbReference type="HOGENOM" id="CLU_019414_3_0_1"/>
<dbReference type="InParanoid" id="P79381"/>
<dbReference type="OrthoDB" id="7130006at2759"/>
<dbReference type="TreeFam" id="TF313813"/>
<dbReference type="Reactome" id="R-SSC-211945">
    <property type="pathway name" value="Phase I - Functionalization of compounds"/>
</dbReference>
<dbReference type="Proteomes" id="UP000008227">
    <property type="component" value="Unplaced"/>
</dbReference>
<dbReference type="Proteomes" id="UP000314985">
    <property type="component" value="Unassembled WGS sequence"/>
</dbReference>
<dbReference type="Proteomes" id="UP000694570">
    <property type="component" value="Unplaced"/>
</dbReference>
<dbReference type="Proteomes" id="UP000694571">
    <property type="component" value="Unplaced"/>
</dbReference>
<dbReference type="Proteomes" id="UP000694720">
    <property type="component" value="Unplaced"/>
</dbReference>
<dbReference type="Proteomes" id="UP000694722">
    <property type="component" value="Unplaced"/>
</dbReference>
<dbReference type="Proteomes" id="UP000694723">
    <property type="component" value="Unplaced"/>
</dbReference>
<dbReference type="Proteomes" id="UP000694724">
    <property type="component" value="Unplaced"/>
</dbReference>
<dbReference type="Proteomes" id="UP000694725">
    <property type="component" value="Unplaced"/>
</dbReference>
<dbReference type="Proteomes" id="UP000694726">
    <property type="component" value="Unplaced"/>
</dbReference>
<dbReference type="Proteomes" id="UP000694727">
    <property type="component" value="Unplaced"/>
</dbReference>
<dbReference type="Proteomes" id="UP000694728">
    <property type="component" value="Unplaced"/>
</dbReference>
<dbReference type="GO" id="GO:0005789">
    <property type="term" value="C:endoplasmic reticulum membrane"/>
    <property type="evidence" value="ECO:0007669"/>
    <property type="project" value="UniProtKB-SubCell"/>
</dbReference>
<dbReference type="GO" id="GO:0033961">
    <property type="term" value="F:cis-stilbene-oxide hydrolase activity"/>
    <property type="evidence" value="ECO:0000250"/>
    <property type="project" value="UniProtKB"/>
</dbReference>
<dbReference type="GO" id="GO:0004301">
    <property type="term" value="F:epoxide hydrolase activity"/>
    <property type="evidence" value="ECO:0000250"/>
    <property type="project" value="UniProtKB"/>
</dbReference>
<dbReference type="GO" id="GO:0008142">
    <property type="term" value="F:oxysterol binding"/>
    <property type="evidence" value="ECO:0000250"/>
    <property type="project" value="UniProtKB"/>
</dbReference>
<dbReference type="GO" id="GO:0019369">
    <property type="term" value="P:arachidonate metabolic process"/>
    <property type="evidence" value="ECO:0000250"/>
    <property type="project" value="UniProtKB"/>
</dbReference>
<dbReference type="GO" id="GO:0009056">
    <property type="term" value="P:catabolic process"/>
    <property type="evidence" value="ECO:0007669"/>
    <property type="project" value="UniProtKB-KW"/>
</dbReference>
<dbReference type="GO" id="GO:0097176">
    <property type="term" value="P:epoxide metabolic process"/>
    <property type="evidence" value="ECO:0000318"/>
    <property type="project" value="GO_Central"/>
</dbReference>
<dbReference type="GO" id="GO:0009636">
    <property type="term" value="P:response to toxic substance"/>
    <property type="evidence" value="ECO:0007669"/>
    <property type="project" value="UniProtKB-KW"/>
</dbReference>
<dbReference type="FunFam" id="3.40.50.1820:FF:000172">
    <property type="entry name" value="Epoxide hydrolase"/>
    <property type="match status" value="1"/>
</dbReference>
<dbReference type="Gene3D" id="3.40.50.1820">
    <property type="entry name" value="alpha/beta hydrolase"/>
    <property type="match status" value="1"/>
</dbReference>
<dbReference type="InterPro" id="IPR029058">
    <property type="entry name" value="AB_hydrolase_fold"/>
</dbReference>
<dbReference type="InterPro" id="IPR000639">
    <property type="entry name" value="Epox_hydrolase-like"/>
</dbReference>
<dbReference type="InterPro" id="IPR010497">
    <property type="entry name" value="Epoxide_hydro_N"/>
</dbReference>
<dbReference type="InterPro" id="IPR016292">
    <property type="entry name" value="Epoxide_hydrolase"/>
</dbReference>
<dbReference type="PANTHER" id="PTHR21661:SF78">
    <property type="entry name" value="EPOXIDE HYDROLASE 1"/>
    <property type="match status" value="1"/>
</dbReference>
<dbReference type="PANTHER" id="PTHR21661">
    <property type="entry name" value="EPOXIDE HYDROLASE 1-RELATED"/>
    <property type="match status" value="1"/>
</dbReference>
<dbReference type="Pfam" id="PF06441">
    <property type="entry name" value="EHN"/>
    <property type="match status" value="1"/>
</dbReference>
<dbReference type="PIRSF" id="PIRSF001112">
    <property type="entry name" value="Epoxide_hydrolase"/>
    <property type="match status" value="1"/>
</dbReference>
<dbReference type="PRINTS" id="PR00412">
    <property type="entry name" value="EPOXHYDRLASE"/>
</dbReference>
<dbReference type="SUPFAM" id="SSF53474">
    <property type="entry name" value="alpha/beta-Hydrolases"/>
    <property type="match status" value="1"/>
</dbReference>
<feature type="chain" id="PRO_0000080857" description="Epoxide hydrolase 1">
    <location>
        <begin position="1"/>
        <end position="454"/>
    </location>
</feature>
<feature type="transmembrane region" description="Helical" evidence="2">
    <location>
        <begin position="1"/>
        <end position="21"/>
    </location>
</feature>
<feature type="topological domain" description="Cytoplasmic" evidence="2">
    <location>
        <begin position="22"/>
        <end position="454"/>
    </location>
</feature>
<feature type="active site" description="Nucleophile" evidence="2">
    <location>
        <position position="226"/>
    </location>
</feature>
<feature type="active site" description="Proton donor" evidence="3">
    <location>
        <position position="373"/>
    </location>
</feature>
<feature type="active site" description="Proton acceptor" evidence="2">
    <location>
        <position position="430"/>
    </location>
</feature>
<feature type="modified residue" description="Dimethylated arginine" evidence="2">
    <location>
        <position position="294"/>
    </location>
</feature>
<sequence length="454" mass="52394">MWLEILLASVLGFVIYWFVSKDKEETLLLGDGWWGPGSRPAAAEDESIRPFKVETSDEEINDLHQRIEKFRLTPPLEDSRFHYGFNSNYLKKIISYWRNTFDWRKQVEVLNKYPHFKTKIEGLDIHFIHVKPPQLPSGRTAKPLLMVHGWPGCFYEFYKIIPLLTDPKNHGLSDEHVFEVICPSIPGYGFSEASSKKGFNSVAAARIFYKLMLRLGFQEFYLQGGDWGSLICTNMAQLVPSHVKGLHLNVALVLRNVYTLTFFLGRRLGRLFGYTERDLELLYPFKKTFYTLMRESGYMHIQSTKPDTVGCALNDSPVGLAAYILEKFSTWTNEEFRDLEDGGLERKFSLDELLTVIMLYWTTGTITSSQRFYKENLGQGVMANKHEAIKVHVPTGFAAFPSEVLHCPEKWVKNKYPKLISYSYMARGGHFAAFEEPELLAQDIRKFMGLLEQQ</sequence>
<keyword id="KW-0058">Aromatic hydrocarbons catabolism</keyword>
<keyword id="KW-0216">Detoxification</keyword>
<keyword id="KW-0256">Endoplasmic reticulum</keyword>
<keyword id="KW-0378">Hydrolase</keyword>
<keyword id="KW-0443">Lipid metabolism</keyword>
<keyword id="KW-0472">Membrane</keyword>
<keyword id="KW-0488">Methylation</keyword>
<keyword id="KW-0492">Microsome</keyword>
<keyword id="KW-1185">Reference proteome</keyword>
<keyword id="KW-0812">Transmembrane</keyword>
<keyword id="KW-1133">Transmembrane helix</keyword>
<gene>
    <name type="primary">EPHX1</name>
</gene>
<comment type="function">
    <text evidence="1 2 4">Biotransformation enzyme that catalyzes the hydrolysis of arene and aliphatic epoxides to less reactive and more water soluble dihydrodiols by the trans addition of water. May play a role in the metabolism of endogenous lipids such as epoxide-containing fatty acids. Metabolizes the abundant endocannabinoid 2-arachidonoylglycerol (2-AG) to free arachidonic acid (AA) and glycerol (By similarity). Binds 20(S)-hydroxycholesterol (20(S)-OHC) (By similarity).</text>
</comment>
<comment type="catalytic activity">
    <reaction evidence="1 2">
        <text>cis-stilbene oxide + H2O = (1R,2R)-hydrobenzoin</text>
        <dbReference type="Rhea" id="RHEA:23900"/>
        <dbReference type="ChEBI" id="CHEBI:15377"/>
        <dbReference type="ChEBI" id="CHEBI:50004"/>
        <dbReference type="ChEBI" id="CHEBI:50014"/>
        <dbReference type="EC" id="3.3.2.9"/>
    </reaction>
    <physiologicalReaction direction="left-to-right" evidence="1">
        <dbReference type="Rhea" id="RHEA:23901"/>
    </physiologicalReaction>
</comment>
<comment type="catalytic activity">
    <reaction evidence="2">
        <text>1-(4-methoxyphenyl)-N-methyl-N-[(3-methyloxetan-3-yl)methyl]methanamine + H2O = 2-{[(4-methoxybenzyl)(methyl)amino]methyl}-2-methylpropane-1,3-diol</text>
        <dbReference type="Rhea" id="RHEA:55764"/>
        <dbReference type="ChEBI" id="CHEBI:15377"/>
        <dbReference type="ChEBI" id="CHEBI:139161"/>
        <dbReference type="ChEBI" id="CHEBI:139164"/>
        <dbReference type="EC" id="3.3.2.9"/>
    </reaction>
</comment>
<comment type="catalytic activity">
    <reaction evidence="1">
        <text>8,9-epoxy-(5Z,11Z,14Z)-eicosatrienoate + H2O = 8,9-dihydroxy-(5Z,11Z,14Z)-eicosatrienoate</text>
        <dbReference type="Rhea" id="RHEA:44048"/>
        <dbReference type="ChEBI" id="CHEBI:15377"/>
        <dbReference type="ChEBI" id="CHEBI:84025"/>
        <dbReference type="ChEBI" id="CHEBI:84032"/>
    </reaction>
    <physiologicalReaction direction="left-to-right" evidence="1">
        <dbReference type="Rhea" id="RHEA:44049"/>
    </physiologicalReaction>
</comment>
<comment type="catalytic activity">
    <reaction evidence="1">
        <text>11,12-epoxy-(5Z,8Z,14Z)-eicosatrienoate + H2O = 11,12-dihydroxy-(5Z,8Z,14Z)-eicosatrienoate</text>
        <dbReference type="Rhea" id="RHEA:44044"/>
        <dbReference type="ChEBI" id="CHEBI:15377"/>
        <dbReference type="ChEBI" id="CHEBI:76625"/>
        <dbReference type="ChEBI" id="CHEBI:84031"/>
    </reaction>
    <physiologicalReaction direction="left-to-right" evidence="1">
        <dbReference type="Rhea" id="RHEA:44045"/>
    </physiologicalReaction>
</comment>
<comment type="catalytic activity">
    <reaction evidence="1">
        <text>2-(5Z,8Z,11Z,14Z-eicosatetraenoyl)-glycerol + H2O = glycerol + (5Z,8Z,11Z,14Z)-eicosatetraenoate + H(+)</text>
        <dbReference type="Rhea" id="RHEA:26132"/>
        <dbReference type="ChEBI" id="CHEBI:15377"/>
        <dbReference type="ChEBI" id="CHEBI:15378"/>
        <dbReference type="ChEBI" id="CHEBI:17754"/>
        <dbReference type="ChEBI" id="CHEBI:32395"/>
        <dbReference type="ChEBI" id="CHEBI:52392"/>
    </reaction>
    <physiologicalReaction direction="left-to-right" evidence="1">
        <dbReference type="Rhea" id="RHEA:26133"/>
    </physiologicalReaction>
</comment>
<comment type="activity regulation">
    <text evidence="1">Inhibited by 10-hydroxystearamide and methoxy-arachidonyl fluorophosphate.</text>
</comment>
<comment type="subcellular location">
    <subcellularLocation>
        <location evidence="2">Microsome membrane</location>
        <topology evidence="2">Single-pass type III membrane protein</topology>
    </subcellularLocation>
    <subcellularLocation>
        <location evidence="2">Endoplasmic reticulum membrane</location>
        <topology evidence="2">Single-pass type III membrane protein</topology>
    </subcellularLocation>
</comment>
<comment type="similarity">
    <text evidence="5">Belongs to the peptidase S33 family.</text>
</comment>
<proteinExistence type="evidence at transcript level"/>
<organism>
    <name type="scientific">Sus scrofa</name>
    <name type="common">Pig</name>
    <dbReference type="NCBI Taxonomy" id="9823"/>
    <lineage>
        <taxon>Eukaryota</taxon>
        <taxon>Metazoa</taxon>
        <taxon>Chordata</taxon>
        <taxon>Craniata</taxon>
        <taxon>Vertebrata</taxon>
        <taxon>Euteleostomi</taxon>
        <taxon>Mammalia</taxon>
        <taxon>Eutheria</taxon>
        <taxon>Laurasiatheria</taxon>
        <taxon>Artiodactyla</taxon>
        <taxon>Suina</taxon>
        <taxon>Suidae</taxon>
        <taxon>Sus</taxon>
    </lineage>
</organism>
<reference key="1">
    <citation type="submission" date="1997-02" db="EMBL/GenBank/DDBJ databases">
        <title>Cloning of the pig epoxide hydrolase gene.</title>
        <authorList>
            <person name="Kawakami K."/>
            <person name="Kimura M."/>
            <person name="Suzuki H."/>
            <person name="Hamasima N."/>
        </authorList>
    </citation>
    <scope>NUCLEOTIDE SEQUENCE [MRNA]</scope>
</reference>
<evidence type="ECO:0000250" key="1">
    <source>
        <dbReference type="UniProtKB" id="P07099"/>
    </source>
</evidence>
<evidence type="ECO:0000250" key="2">
    <source>
        <dbReference type="UniProtKB" id="P07687"/>
    </source>
</evidence>
<evidence type="ECO:0000250" key="3">
    <source>
        <dbReference type="UniProtKB" id="P34913"/>
    </source>
</evidence>
<evidence type="ECO:0000250" key="4">
    <source>
        <dbReference type="UniProtKB" id="Q9D379"/>
    </source>
</evidence>
<evidence type="ECO:0000305" key="5"/>